<name>COAE_PARMW</name>
<proteinExistence type="inferred from homology"/>
<comment type="function">
    <text evidence="1">Catalyzes the phosphorylation of the 3'-hydroxyl group of dephosphocoenzyme A to form coenzyme A.</text>
</comment>
<comment type="catalytic activity">
    <reaction evidence="1">
        <text>3'-dephospho-CoA + ATP = ADP + CoA + H(+)</text>
        <dbReference type="Rhea" id="RHEA:18245"/>
        <dbReference type="ChEBI" id="CHEBI:15378"/>
        <dbReference type="ChEBI" id="CHEBI:30616"/>
        <dbReference type="ChEBI" id="CHEBI:57287"/>
        <dbReference type="ChEBI" id="CHEBI:57328"/>
        <dbReference type="ChEBI" id="CHEBI:456216"/>
        <dbReference type="EC" id="2.7.1.24"/>
    </reaction>
</comment>
<comment type="pathway">
    <text evidence="1">Cofactor biosynthesis; coenzyme A biosynthesis; CoA from (R)-pantothenate: step 5/5.</text>
</comment>
<comment type="subcellular location">
    <subcellularLocation>
        <location evidence="1">Cytoplasm</location>
    </subcellularLocation>
</comment>
<comment type="similarity">
    <text evidence="1">Belongs to the CoaE family.</text>
</comment>
<reference key="1">
    <citation type="journal article" date="2003" name="Nature">
        <title>The genome of a motile marine Synechococcus.</title>
        <authorList>
            <person name="Palenik B."/>
            <person name="Brahamsha B."/>
            <person name="Larimer F.W."/>
            <person name="Land M.L."/>
            <person name="Hauser L."/>
            <person name="Chain P."/>
            <person name="Lamerdin J.E."/>
            <person name="Regala W."/>
            <person name="Allen E.E."/>
            <person name="McCarren J."/>
            <person name="Paulsen I.T."/>
            <person name="Dufresne A."/>
            <person name="Partensky F."/>
            <person name="Webb E.A."/>
            <person name="Waterbury J."/>
        </authorList>
    </citation>
    <scope>NUCLEOTIDE SEQUENCE [LARGE SCALE GENOMIC DNA]</scope>
    <source>
        <strain>WH8102</strain>
    </source>
</reference>
<gene>
    <name evidence="1" type="primary">coaE</name>
    <name type="ordered locus">SYNW2354</name>
</gene>
<keyword id="KW-0067">ATP-binding</keyword>
<keyword id="KW-0173">Coenzyme A biosynthesis</keyword>
<keyword id="KW-0963">Cytoplasm</keyword>
<keyword id="KW-0418">Kinase</keyword>
<keyword id="KW-0547">Nucleotide-binding</keyword>
<keyword id="KW-0808">Transferase</keyword>
<dbReference type="EC" id="2.7.1.24" evidence="1"/>
<dbReference type="EMBL" id="BX569695">
    <property type="protein sequence ID" value="CAE08869.1"/>
    <property type="molecule type" value="Genomic_DNA"/>
</dbReference>
<dbReference type="RefSeq" id="WP_011129207.1">
    <property type="nucleotide sequence ID" value="NC_005070.1"/>
</dbReference>
<dbReference type="SMR" id="Q7U3S5"/>
<dbReference type="STRING" id="84588.SYNW2354"/>
<dbReference type="KEGG" id="syw:SYNW2354"/>
<dbReference type="eggNOG" id="COG0237">
    <property type="taxonomic scope" value="Bacteria"/>
</dbReference>
<dbReference type="HOGENOM" id="CLU_057180_0_0_3"/>
<dbReference type="UniPathway" id="UPA00241">
    <property type="reaction ID" value="UER00356"/>
</dbReference>
<dbReference type="Proteomes" id="UP000001422">
    <property type="component" value="Chromosome"/>
</dbReference>
<dbReference type="GO" id="GO:0005737">
    <property type="term" value="C:cytoplasm"/>
    <property type="evidence" value="ECO:0007669"/>
    <property type="project" value="UniProtKB-SubCell"/>
</dbReference>
<dbReference type="GO" id="GO:0005524">
    <property type="term" value="F:ATP binding"/>
    <property type="evidence" value="ECO:0007669"/>
    <property type="project" value="UniProtKB-UniRule"/>
</dbReference>
<dbReference type="GO" id="GO:0004140">
    <property type="term" value="F:dephospho-CoA kinase activity"/>
    <property type="evidence" value="ECO:0007669"/>
    <property type="project" value="UniProtKB-UniRule"/>
</dbReference>
<dbReference type="GO" id="GO:0015937">
    <property type="term" value="P:coenzyme A biosynthetic process"/>
    <property type="evidence" value="ECO:0007669"/>
    <property type="project" value="UniProtKB-UniRule"/>
</dbReference>
<dbReference type="CDD" id="cd02022">
    <property type="entry name" value="DPCK"/>
    <property type="match status" value="1"/>
</dbReference>
<dbReference type="FunFam" id="3.40.50.300:FF:000991">
    <property type="entry name" value="Dephospho-CoA kinase"/>
    <property type="match status" value="1"/>
</dbReference>
<dbReference type="Gene3D" id="3.40.50.300">
    <property type="entry name" value="P-loop containing nucleotide triphosphate hydrolases"/>
    <property type="match status" value="1"/>
</dbReference>
<dbReference type="HAMAP" id="MF_00376">
    <property type="entry name" value="Dephospho_CoA_kinase"/>
    <property type="match status" value="1"/>
</dbReference>
<dbReference type="InterPro" id="IPR001977">
    <property type="entry name" value="Depp_CoAkinase"/>
</dbReference>
<dbReference type="InterPro" id="IPR027417">
    <property type="entry name" value="P-loop_NTPase"/>
</dbReference>
<dbReference type="NCBIfam" id="TIGR00152">
    <property type="entry name" value="dephospho-CoA kinase"/>
    <property type="match status" value="1"/>
</dbReference>
<dbReference type="PANTHER" id="PTHR10695:SF46">
    <property type="entry name" value="BIFUNCTIONAL COENZYME A SYNTHASE-RELATED"/>
    <property type="match status" value="1"/>
</dbReference>
<dbReference type="PANTHER" id="PTHR10695">
    <property type="entry name" value="DEPHOSPHO-COA KINASE-RELATED"/>
    <property type="match status" value="1"/>
</dbReference>
<dbReference type="Pfam" id="PF01121">
    <property type="entry name" value="CoaE"/>
    <property type="match status" value="1"/>
</dbReference>
<dbReference type="SUPFAM" id="SSF52540">
    <property type="entry name" value="P-loop containing nucleoside triphosphate hydrolases"/>
    <property type="match status" value="1"/>
</dbReference>
<dbReference type="PROSITE" id="PS51219">
    <property type="entry name" value="DPCK"/>
    <property type="match status" value="1"/>
</dbReference>
<protein>
    <recommendedName>
        <fullName evidence="1">Dephospho-CoA kinase</fullName>
        <ecNumber evidence="1">2.7.1.24</ecNumber>
    </recommendedName>
    <alternativeName>
        <fullName evidence="1">Dephosphocoenzyme A kinase</fullName>
    </alternativeName>
</protein>
<organism>
    <name type="scientific">Parasynechococcus marenigrum (strain WH8102)</name>
    <dbReference type="NCBI Taxonomy" id="84588"/>
    <lineage>
        <taxon>Bacteria</taxon>
        <taxon>Bacillati</taxon>
        <taxon>Cyanobacteriota</taxon>
        <taxon>Cyanophyceae</taxon>
        <taxon>Synechococcales</taxon>
        <taxon>Prochlorococcaceae</taxon>
        <taxon>Parasynechococcus</taxon>
        <taxon>Parasynechococcus marenigrum</taxon>
    </lineage>
</organism>
<sequence length="198" mass="21855">MQRRIGLTGGIASGKSSVGRLLEARGWPVLDADQYARDALAPNTAASQAVAHHFGAAVGTAADLDRKALGRIVFSDPDQRRWLEALIHPVVRERFQHELAELRDEPVVVLMIPLLFEAGLDVLCSEIWLVDCTPKQQLERMIQRDGLTKNEAQNRLQAQWPIARKRDRADCVIDNSGGVNDLLAAVSRCGLRADGTTW</sequence>
<feature type="chain" id="PRO_0000173019" description="Dephospho-CoA kinase">
    <location>
        <begin position="1"/>
        <end position="198"/>
    </location>
</feature>
<feature type="domain" description="DPCK" evidence="1">
    <location>
        <begin position="4"/>
        <end position="198"/>
    </location>
</feature>
<feature type="binding site" evidence="1">
    <location>
        <begin position="12"/>
        <end position="17"/>
    </location>
    <ligand>
        <name>ATP</name>
        <dbReference type="ChEBI" id="CHEBI:30616"/>
    </ligand>
</feature>
<accession>Q7U3S5</accession>
<evidence type="ECO:0000255" key="1">
    <source>
        <dbReference type="HAMAP-Rule" id="MF_00376"/>
    </source>
</evidence>